<accession>A0A0K8RJV9</accession>
<accession>Q06B73</accession>
<sequence length="392" mass="43630">MRSLATFMSLLTICWGLHEDRLTLANNRFAISLLHNLPTSTETNIFFSPYSISVALGMAFAGARGETREDLFQGFGYPRSDIDDDAVLEAYASHTRRLKSLRSNSTLDAAIGAAIHERISLLSSFEDVLNNSFGADILKVDFINGGQAAVDVINGWVHRKTRGKINLLFGGPLETIIRLVLLNAIYFKGTWDTVFDQRLTTKKPFMNACSTPTEVDTMRGEVYVRHKSFPLLGVDIAEIPYRGMDYSMTILLPTRIDGAEVLKRNITEHLLQDLVKQLVEQQVTVYLPKFKLETEYLLKDHLKKLGINRIFGSGADFSGITHGANLAVSDVVHKTVLEVHEAGTEAAGATGVIIVAESLVESVEFRVDHPFIFFIRNTQTKDILFVGQVNHL</sequence>
<evidence type="ECO:0000255" key="1"/>
<evidence type="ECO:0000255" key="2">
    <source>
        <dbReference type="PROSITE-ProRule" id="PRU00498"/>
    </source>
</evidence>
<evidence type="ECO:0000269" key="3">
    <source>
    </source>
</evidence>
<evidence type="ECO:0000269" key="4">
    <source>
    </source>
</evidence>
<evidence type="ECO:0000303" key="5">
    <source>
    </source>
</evidence>
<evidence type="ECO:0000303" key="6">
    <source>
    </source>
</evidence>
<evidence type="ECO:0000305" key="7"/>
<evidence type="ECO:0000312" key="8">
    <source>
        <dbReference type="EMBL" id="ABI94057.1"/>
    </source>
</evidence>
<evidence type="ECO:0000312" key="9">
    <source>
        <dbReference type="EMBL" id="JAA71158.1"/>
    </source>
</evidence>
<evidence type="ECO:0007744" key="10">
    <source>
        <dbReference type="PDB" id="7ZAS"/>
    </source>
</evidence>
<evidence type="ECO:0007744" key="11">
    <source>
        <dbReference type="PDB" id="7ZBF"/>
    </source>
</evidence>
<evidence type="ECO:0007829" key="12">
    <source>
        <dbReference type="PDB" id="7ZBF"/>
    </source>
</evidence>
<keyword id="KW-0002">3D-structure</keyword>
<keyword id="KW-0325">Glycoprotein</keyword>
<keyword id="KW-0646">Protease inhibitor</keyword>
<keyword id="KW-0964">Secreted</keyword>
<keyword id="KW-0722">Serine protease inhibitor</keyword>
<keyword id="KW-0732">Signal</keyword>
<comment type="function">
    <text evidence="4">Serpin with unknown function (PubMed:37092969). Weakly inhibits human granzyme B (GZMB) (PubMed:37092969). Acts as a substrate for porcine elastase (PubMed:37092969).</text>
</comment>
<comment type="subcellular location">
    <subcellularLocation>
        <location evidence="7">Secreted</location>
    </subcellularLocation>
</comment>
<comment type="tissue specificity">
    <text evidence="3">Female salivary gland.</text>
</comment>
<comment type="similarity">
    <text evidence="7">Belongs to the serpin family.</text>
</comment>
<proteinExistence type="evidence at protein level"/>
<name>IRS4_IXORI</name>
<dbReference type="EMBL" id="DQ915844">
    <property type="protein sequence ID" value="ABI94057.1"/>
    <property type="molecule type" value="mRNA"/>
</dbReference>
<dbReference type="EMBL" id="GADI01002650">
    <property type="protein sequence ID" value="JAA71158.1"/>
    <property type="molecule type" value="mRNA"/>
</dbReference>
<dbReference type="PDB" id="7ZAS">
    <property type="method" value="X-ray"/>
    <property type="resolution" value="2.00 A"/>
    <property type="chains" value="A/B/C/D=17-357, aa/bb/cc/dd=358-392"/>
</dbReference>
<dbReference type="PDB" id="7ZBF">
    <property type="method" value="X-ray"/>
    <property type="resolution" value="2.30 A"/>
    <property type="chains" value="A=17-392"/>
</dbReference>
<dbReference type="PDBsum" id="7ZAS"/>
<dbReference type="PDBsum" id="7ZBF"/>
<dbReference type="SMR" id="A0A0K8RJV9"/>
<dbReference type="MEROPS" id="I04.088"/>
<dbReference type="GO" id="GO:0005615">
    <property type="term" value="C:extracellular space"/>
    <property type="evidence" value="ECO:0007669"/>
    <property type="project" value="InterPro"/>
</dbReference>
<dbReference type="GO" id="GO:0004867">
    <property type="term" value="F:serine-type endopeptidase inhibitor activity"/>
    <property type="evidence" value="ECO:0007669"/>
    <property type="project" value="UniProtKB-KW"/>
</dbReference>
<dbReference type="CDD" id="cd19577">
    <property type="entry name" value="serpinJ_IRS-2-like"/>
    <property type="match status" value="1"/>
</dbReference>
<dbReference type="FunFam" id="3.30.497.10:FF:000031">
    <property type="entry name" value="Putative salivary serpin"/>
    <property type="match status" value="1"/>
</dbReference>
<dbReference type="Gene3D" id="2.30.39.10">
    <property type="entry name" value="Alpha-1-antitrypsin, domain 1"/>
    <property type="match status" value="1"/>
</dbReference>
<dbReference type="Gene3D" id="3.30.497.10">
    <property type="entry name" value="Antithrombin, subunit I, domain 2"/>
    <property type="match status" value="1"/>
</dbReference>
<dbReference type="InterPro" id="IPR023795">
    <property type="entry name" value="Serpin_CS"/>
</dbReference>
<dbReference type="InterPro" id="IPR023796">
    <property type="entry name" value="Serpin_dom"/>
</dbReference>
<dbReference type="InterPro" id="IPR000215">
    <property type="entry name" value="Serpin_fam"/>
</dbReference>
<dbReference type="InterPro" id="IPR036186">
    <property type="entry name" value="Serpin_sf"/>
</dbReference>
<dbReference type="InterPro" id="IPR042178">
    <property type="entry name" value="Serpin_sf_1"/>
</dbReference>
<dbReference type="InterPro" id="IPR042185">
    <property type="entry name" value="Serpin_sf_2"/>
</dbReference>
<dbReference type="PANTHER" id="PTHR11461:SF211">
    <property type="entry name" value="GH10112P-RELATED"/>
    <property type="match status" value="1"/>
</dbReference>
<dbReference type="PANTHER" id="PTHR11461">
    <property type="entry name" value="SERINE PROTEASE INHIBITOR, SERPIN"/>
    <property type="match status" value="1"/>
</dbReference>
<dbReference type="Pfam" id="PF00079">
    <property type="entry name" value="Serpin"/>
    <property type="match status" value="1"/>
</dbReference>
<dbReference type="SMART" id="SM00093">
    <property type="entry name" value="SERPIN"/>
    <property type="match status" value="1"/>
</dbReference>
<dbReference type="SUPFAM" id="SSF56574">
    <property type="entry name" value="Serpins"/>
    <property type="match status" value="1"/>
</dbReference>
<dbReference type="PROSITE" id="PS00284">
    <property type="entry name" value="SERPIN"/>
    <property type="match status" value="1"/>
</dbReference>
<protein>
    <recommendedName>
        <fullName evidence="6">Iripin-4</fullName>
    </recommendedName>
    <alternativeName>
        <fullName evidence="5">I ricinus serpin-4</fullName>
        <shortName evidence="5">IRS-4</shortName>
    </alternativeName>
</protein>
<reference evidence="8" key="1">
    <citation type="journal article" date="2011" name="Blood">
        <title>A tick salivary protein targets cathepsin G and chymase and inhibits host inflammation and platelet aggregation.</title>
        <authorList>
            <person name="Chmelar J."/>
            <person name="Oliveira C.J."/>
            <person name="Rezacova P."/>
            <person name="Francischetti I.M."/>
            <person name="Kovarova Z."/>
            <person name="Pejler G."/>
            <person name="Kopacek P."/>
            <person name="Ribeiro J.M."/>
            <person name="Mares M."/>
            <person name="Kopecky J."/>
            <person name="Kotsyfakis M."/>
        </authorList>
    </citation>
    <scope>NUCLEOTIDE SEQUENCE [LARGE SCALE MRNA]</scope>
    <scope>TISSUE SPECIFICITY</scope>
    <source>
        <tissue evidence="8">Salivary gland</tissue>
    </source>
</reference>
<reference evidence="9" key="2">
    <citation type="submission" date="2012-12" db="EMBL/GenBank/DDBJ databases">
        <title>De novo Ixodes ricinus salivary transcriptome analysis using two different next generation sequencing methodologies.</title>
        <authorList>
            <person name="Schwarz A."/>
            <person name="von Reumont B.M."/>
            <person name="Erhart J."/>
            <person name="Chagas A.C."/>
            <person name="Ribeiro J.M.C."/>
            <person name="Kotsyfakis M."/>
        </authorList>
    </citation>
    <scope>NUCLEOTIDE SEQUENCE [LARGE SCALE MRNA]</scope>
    <source>
        <tissue evidence="9">Salivary gland</tissue>
    </source>
</reference>
<reference evidence="10 11" key="3">
    <citation type="journal article" date="2023" name="Acta Crystallogr. D Struct. Biol.">
        <title>Conformational transition of the Ixodes ricinus salivary serpin Iripin-4.</title>
        <authorList>
            <person name="Kascakova B."/>
            <person name="Kotal J."/>
            <person name="Havlickova P."/>
            <person name="Vopatkova V."/>
            <person name="Prudnikova T."/>
            <person name="Grinkevich P."/>
            <person name="Kuty M."/>
            <person name="Chmelar J."/>
            <person name="Kuta Smatanova I."/>
        </authorList>
    </citation>
    <scope>X-RAY CRYSTALLOGRAPHY (2.00 ANGSTROMS) OF 17-357 AND 358-392</scope>
    <scope>FUNCTION</scope>
    <scope>VARIANTS GLN-94; GLU-171 AND ASP-323</scope>
</reference>
<feature type="signal peptide" evidence="1">
    <location>
        <begin position="1"/>
        <end position="16"/>
    </location>
</feature>
<feature type="chain" id="PRO_5005517993" description="Iripin-4" evidence="1">
    <location>
        <begin position="17"/>
        <end position="392"/>
    </location>
</feature>
<feature type="glycosylation site" description="N-linked (GlcNAc...) asparagine" evidence="2">
    <location>
        <position position="104"/>
    </location>
</feature>
<feature type="glycosylation site" description="N-linked (GlcNAc...) asparagine" evidence="2">
    <location>
        <position position="130"/>
    </location>
</feature>
<feature type="glycosylation site" description="N-linked (GlcNAc...) asparagine" evidence="2">
    <location>
        <position position="265"/>
    </location>
</feature>
<feature type="sequence variant" evidence="4">
    <original>H</original>
    <variation>Q</variation>
    <location>
        <position position="94"/>
    </location>
</feature>
<feature type="sequence variant" evidence="4">
    <original>G</original>
    <variation>E</variation>
    <location>
        <position position="171"/>
    </location>
</feature>
<feature type="sequence variant" evidence="4">
    <original>G</original>
    <variation>D</variation>
    <location>
        <position position="323"/>
    </location>
</feature>
<feature type="sequence conflict" description="In Ref. 1; ABI94057." evidence="7" ref="1">
    <original>G</original>
    <variation>E</variation>
    <location>
        <position position="171"/>
    </location>
</feature>
<feature type="sequence conflict" description="In Ref. 1; ABI94057." evidence="7" ref="1">
    <original>HG</original>
    <variation>PD</variation>
    <location>
        <begin position="322"/>
        <end position="323"/>
    </location>
</feature>
<feature type="sequence conflict" description="In Ref. 1; ABI94057." evidence="7" ref="1">
    <original>H</original>
    <variation>P</variation>
    <location>
        <position position="333"/>
    </location>
</feature>
<feature type="sequence conflict" description="In Ref. 1; ABI94057." evidence="7" ref="1">
    <original>H</original>
    <variation>P</variation>
    <location>
        <position position="340"/>
    </location>
</feature>
<feature type="helix" evidence="12">
    <location>
        <begin position="20"/>
        <end position="36"/>
    </location>
</feature>
<feature type="strand" evidence="12">
    <location>
        <begin position="45"/>
        <end position="47"/>
    </location>
</feature>
<feature type="helix" evidence="12">
    <location>
        <begin position="49"/>
        <end position="62"/>
    </location>
</feature>
<feature type="helix" evidence="12">
    <location>
        <begin position="65"/>
        <end position="75"/>
    </location>
</feature>
<feature type="helix" evidence="12">
    <location>
        <begin position="77"/>
        <end position="80"/>
    </location>
</feature>
<feature type="helix" evidence="12">
    <location>
        <begin position="84"/>
        <end position="86"/>
    </location>
</feature>
<feature type="helix" evidence="12">
    <location>
        <begin position="87"/>
        <end position="98"/>
    </location>
</feature>
<feature type="strand" evidence="12">
    <location>
        <begin position="104"/>
        <end position="116"/>
    </location>
</feature>
<feature type="helix" evidence="12">
    <location>
        <begin position="123"/>
        <end position="133"/>
    </location>
</feature>
<feature type="strand" evidence="12">
    <location>
        <begin position="136"/>
        <end position="140"/>
    </location>
</feature>
<feature type="turn" evidence="12">
    <location>
        <begin position="142"/>
        <end position="144"/>
    </location>
</feature>
<feature type="helix" evidence="12">
    <location>
        <begin position="146"/>
        <end position="160"/>
    </location>
</feature>
<feature type="turn" evidence="12">
    <location>
        <begin position="161"/>
        <end position="163"/>
    </location>
</feature>
<feature type="strand" evidence="12">
    <location>
        <begin position="179"/>
        <end position="188"/>
    </location>
</feature>
<feature type="strand" evidence="12">
    <location>
        <begin position="190"/>
        <end position="193"/>
    </location>
</feature>
<feature type="helix" evidence="12">
    <location>
        <begin position="197"/>
        <end position="199"/>
    </location>
</feature>
<feature type="strand" evidence="12">
    <location>
        <begin position="201"/>
        <end position="206"/>
    </location>
</feature>
<feature type="strand" evidence="12">
    <location>
        <begin position="212"/>
        <end position="229"/>
    </location>
</feature>
<feature type="turn" evidence="12">
    <location>
        <begin position="230"/>
        <end position="233"/>
    </location>
</feature>
<feature type="strand" evidence="12">
    <location>
        <begin position="234"/>
        <end position="241"/>
    </location>
</feature>
<feature type="strand" evidence="12">
    <location>
        <begin position="244"/>
        <end position="255"/>
    </location>
</feature>
<feature type="helix" evidence="12">
    <location>
        <begin position="259"/>
        <end position="265"/>
    </location>
</feature>
<feature type="helix" evidence="12">
    <location>
        <begin position="268"/>
        <end position="275"/>
    </location>
</feature>
<feature type="strand" evidence="12">
    <location>
        <begin position="279"/>
        <end position="288"/>
    </location>
</feature>
<feature type="strand" evidence="12">
    <location>
        <begin position="291"/>
        <end position="297"/>
    </location>
</feature>
<feature type="helix" evidence="12">
    <location>
        <begin position="299"/>
        <end position="303"/>
    </location>
</feature>
<feature type="turn" evidence="12">
    <location>
        <begin position="304"/>
        <end position="306"/>
    </location>
</feature>
<feature type="helix" evidence="12">
    <location>
        <begin position="309"/>
        <end position="311"/>
    </location>
</feature>
<feature type="turn" evidence="12">
    <location>
        <begin position="318"/>
        <end position="320"/>
    </location>
</feature>
<feature type="strand" evidence="12">
    <location>
        <begin position="322"/>
        <end position="324"/>
    </location>
</feature>
<feature type="strand" evidence="12">
    <location>
        <begin position="331"/>
        <end position="338"/>
    </location>
</feature>
<feature type="strand" evidence="12">
    <location>
        <begin position="341"/>
        <end position="345"/>
    </location>
</feature>
<feature type="strand" evidence="12">
    <location>
        <begin position="363"/>
        <end position="366"/>
    </location>
</feature>
<feature type="strand" evidence="12">
    <location>
        <begin position="371"/>
        <end position="377"/>
    </location>
</feature>
<feature type="turn" evidence="12">
    <location>
        <begin position="378"/>
        <end position="380"/>
    </location>
</feature>
<feature type="strand" evidence="12">
    <location>
        <begin position="383"/>
        <end position="389"/>
    </location>
</feature>
<organism evidence="9">
    <name type="scientific">Ixodes ricinus</name>
    <name type="common">Common tick</name>
    <name type="synonym">Acarus ricinus</name>
    <dbReference type="NCBI Taxonomy" id="34613"/>
    <lineage>
        <taxon>Eukaryota</taxon>
        <taxon>Metazoa</taxon>
        <taxon>Ecdysozoa</taxon>
        <taxon>Arthropoda</taxon>
        <taxon>Chelicerata</taxon>
        <taxon>Arachnida</taxon>
        <taxon>Acari</taxon>
        <taxon>Parasitiformes</taxon>
        <taxon>Ixodida</taxon>
        <taxon>Ixodoidea</taxon>
        <taxon>Ixodidae</taxon>
        <taxon>Ixodinae</taxon>
        <taxon>Ixodes</taxon>
    </lineage>
</organism>